<sequence length="350" mass="37333">MLYNIARPLLFSLDPETAHELSLAALHFFGRVLPAATPTESDPVDVMGLHFPNRIGLAAGLDKNGEAIDGLARLGFGFLEIGTITPRPQPGNPRPRMFRLPEVRAIINRMGFNNHGVDALVANVRAAKYRGILGINIGKNFDTPIDRAADDYLACLDKVYALASYVTVNISSPNTKNLRQLQGESELDDLLGRLKARQQQLADRHGRYVPLTLKIAPDLEPAQVTNIADALRRHRIDGVIATNTTIARDKVQGVRYAEQQGGLSGAPVFEASTAVVAQLSRALAGELPIIAAGGILDGRGARAKLAAGASLVQVYSGLIYRGPSLIAECVRATTDFADSGHAATSASFGA</sequence>
<comment type="function">
    <text evidence="1">Catalyzes the conversion of dihydroorotate to orotate with quinone as electron acceptor.</text>
</comment>
<comment type="catalytic activity">
    <reaction evidence="1">
        <text>(S)-dihydroorotate + a quinone = orotate + a quinol</text>
        <dbReference type="Rhea" id="RHEA:30187"/>
        <dbReference type="ChEBI" id="CHEBI:24646"/>
        <dbReference type="ChEBI" id="CHEBI:30839"/>
        <dbReference type="ChEBI" id="CHEBI:30864"/>
        <dbReference type="ChEBI" id="CHEBI:132124"/>
        <dbReference type="EC" id="1.3.5.2"/>
    </reaction>
</comment>
<comment type="cofactor">
    <cofactor evidence="1">
        <name>FMN</name>
        <dbReference type="ChEBI" id="CHEBI:58210"/>
    </cofactor>
    <text evidence="1">Binds 1 FMN per subunit.</text>
</comment>
<comment type="pathway">
    <text evidence="1">Pyrimidine metabolism; UMP biosynthesis via de novo pathway; orotate from (S)-dihydroorotate (quinone route): step 1/1.</text>
</comment>
<comment type="subunit">
    <text evidence="1">Monomer.</text>
</comment>
<comment type="subcellular location">
    <subcellularLocation>
        <location evidence="1">Cell membrane</location>
        <topology evidence="1">Peripheral membrane protein</topology>
    </subcellularLocation>
</comment>
<comment type="similarity">
    <text evidence="1">Belongs to the dihydroorotate dehydrogenase family. Type 2 subfamily.</text>
</comment>
<protein>
    <recommendedName>
        <fullName evidence="1">Dihydroorotate dehydrogenase (quinone)</fullName>
        <ecNumber evidence="1">1.3.5.2</ecNumber>
    </recommendedName>
    <alternativeName>
        <fullName evidence="1">DHOdehase</fullName>
        <shortName evidence="1">DHOD</shortName>
        <shortName evidence="1">DHODase</shortName>
    </alternativeName>
    <alternativeName>
        <fullName evidence="1">Dihydroorotate oxidase</fullName>
    </alternativeName>
</protein>
<accession>Q5P1A9</accession>
<keyword id="KW-1003">Cell membrane</keyword>
<keyword id="KW-0285">Flavoprotein</keyword>
<keyword id="KW-0288">FMN</keyword>
<keyword id="KW-0472">Membrane</keyword>
<keyword id="KW-0560">Oxidoreductase</keyword>
<keyword id="KW-0665">Pyrimidine biosynthesis</keyword>
<keyword id="KW-1185">Reference proteome</keyword>
<feature type="chain" id="PRO_0000148422" description="Dihydroorotate dehydrogenase (quinone)">
    <location>
        <begin position="1"/>
        <end position="350"/>
    </location>
</feature>
<feature type="active site" description="Nucleophile" evidence="1">
    <location>
        <position position="172"/>
    </location>
</feature>
<feature type="binding site" evidence="1">
    <location>
        <begin position="59"/>
        <end position="63"/>
    </location>
    <ligand>
        <name>FMN</name>
        <dbReference type="ChEBI" id="CHEBI:58210"/>
    </ligand>
</feature>
<feature type="binding site" evidence="1">
    <location>
        <position position="63"/>
    </location>
    <ligand>
        <name>substrate</name>
    </ligand>
</feature>
<feature type="binding site" evidence="1">
    <location>
        <position position="83"/>
    </location>
    <ligand>
        <name>FMN</name>
        <dbReference type="ChEBI" id="CHEBI:58210"/>
    </ligand>
</feature>
<feature type="binding site" evidence="1">
    <location>
        <begin position="108"/>
        <end position="112"/>
    </location>
    <ligand>
        <name>substrate</name>
    </ligand>
</feature>
<feature type="binding site" evidence="1">
    <location>
        <position position="136"/>
    </location>
    <ligand>
        <name>FMN</name>
        <dbReference type="ChEBI" id="CHEBI:58210"/>
    </ligand>
</feature>
<feature type="binding site" evidence="1">
    <location>
        <position position="169"/>
    </location>
    <ligand>
        <name>FMN</name>
        <dbReference type="ChEBI" id="CHEBI:58210"/>
    </ligand>
</feature>
<feature type="binding site" evidence="1">
    <location>
        <position position="169"/>
    </location>
    <ligand>
        <name>substrate</name>
    </ligand>
</feature>
<feature type="binding site" evidence="1">
    <location>
        <position position="174"/>
    </location>
    <ligand>
        <name>substrate</name>
    </ligand>
</feature>
<feature type="binding site" evidence="1">
    <location>
        <position position="214"/>
    </location>
    <ligand>
        <name>FMN</name>
        <dbReference type="ChEBI" id="CHEBI:58210"/>
    </ligand>
</feature>
<feature type="binding site" evidence="1">
    <location>
        <position position="242"/>
    </location>
    <ligand>
        <name>FMN</name>
        <dbReference type="ChEBI" id="CHEBI:58210"/>
    </ligand>
</feature>
<feature type="binding site" evidence="1">
    <location>
        <begin position="243"/>
        <end position="244"/>
    </location>
    <ligand>
        <name>substrate</name>
    </ligand>
</feature>
<feature type="binding site" evidence="1">
    <location>
        <position position="265"/>
    </location>
    <ligand>
        <name>FMN</name>
        <dbReference type="ChEBI" id="CHEBI:58210"/>
    </ligand>
</feature>
<feature type="binding site" evidence="1">
    <location>
        <position position="294"/>
    </location>
    <ligand>
        <name>FMN</name>
        <dbReference type="ChEBI" id="CHEBI:58210"/>
    </ligand>
</feature>
<feature type="binding site" evidence="1">
    <location>
        <begin position="315"/>
        <end position="316"/>
    </location>
    <ligand>
        <name>FMN</name>
        <dbReference type="ChEBI" id="CHEBI:58210"/>
    </ligand>
</feature>
<evidence type="ECO:0000255" key="1">
    <source>
        <dbReference type="HAMAP-Rule" id="MF_00225"/>
    </source>
</evidence>
<organism>
    <name type="scientific">Aromatoleum aromaticum (strain DSM 19018 / LMG 30748 / EbN1)</name>
    <name type="common">Azoarcus sp. (strain EbN1)</name>
    <dbReference type="NCBI Taxonomy" id="76114"/>
    <lineage>
        <taxon>Bacteria</taxon>
        <taxon>Pseudomonadati</taxon>
        <taxon>Pseudomonadota</taxon>
        <taxon>Betaproteobacteria</taxon>
        <taxon>Rhodocyclales</taxon>
        <taxon>Rhodocyclaceae</taxon>
        <taxon>Aromatoleum</taxon>
    </lineage>
</organism>
<reference key="1">
    <citation type="journal article" date="2005" name="Arch. Microbiol.">
        <title>The genome sequence of an anaerobic aromatic-degrading denitrifying bacterium, strain EbN1.</title>
        <authorList>
            <person name="Rabus R."/>
            <person name="Kube M."/>
            <person name="Heider J."/>
            <person name="Beck A."/>
            <person name="Heitmann K."/>
            <person name="Widdel F."/>
            <person name="Reinhardt R."/>
        </authorList>
    </citation>
    <scope>NUCLEOTIDE SEQUENCE [LARGE SCALE GENOMIC DNA]</scope>
    <source>
        <strain>DSM 19018 / LMG 30748 / EbN1</strain>
    </source>
</reference>
<gene>
    <name evidence="1" type="primary">pyrD</name>
    <name type="ordered locus">AZOSEA27800</name>
    <name type="ORF">ebA4888</name>
</gene>
<proteinExistence type="inferred from homology"/>
<dbReference type="EC" id="1.3.5.2" evidence="1"/>
<dbReference type="EMBL" id="CR555306">
    <property type="protein sequence ID" value="CAI08905.1"/>
    <property type="molecule type" value="Genomic_DNA"/>
</dbReference>
<dbReference type="RefSeq" id="WP_011238588.1">
    <property type="nucleotide sequence ID" value="NC_006513.1"/>
</dbReference>
<dbReference type="SMR" id="Q5P1A9"/>
<dbReference type="STRING" id="76114.ebA4888"/>
<dbReference type="KEGG" id="eba:ebA4888"/>
<dbReference type="eggNOG" id="COG0167">
    <property type="taxonomic scope" value="Bacteria"/>
</dbReference>
<dbReference type="HOGENOM" id="CLU_013640_2_0_4"/>
<dbReference type="OrthoDB" id="9802377at2"/>
<dbReference type="UniPathway" id="UPA00070">
    <property type="reaction ID" value="UER00946"/>
</dbReference>
<dbReference type="Proteomes" id="UP000006552">
    <property type="component" value="Chromosome"/>
</dbReference>
<dbReference type="GO" id="GO:0005737">
    <property type="term" value="C:cytoplasm"/>
    <property type="evidence" value="ECO:0007669"/>
    <property type="project" value="InterPro"/>
</dbReference>
<dbReference type="GO" id="GO:0005886">
    <property type="term" value="C:plasma membrane"/>
    <property type="evidence" value="ECO:0007669"/>
    <property type="project" value="UniProtKB-SubCell"/>
</dbReference>
<dbReference type="GO" id="GO:0106430">
    <property type="term" value="F:dihydroorotate dehydrogenase (quinone) activity"/>
    <property type="evidence" value="ECO:0007669"/>
    <property type="project" value="UniProtKB-EC"/>
</dbReference>
<dbReference type="GO" id="GO:0006207">
    <property type="term" value="P:'de novo' pyrimidine nucleobase biosynthetic process"/>
    <property type="evidence" value="ECO:0007669"/>
    <property type="project" value="InterPro"/>
</dbReference>
<dbReference type="GO" id="GO:0044205">
    <property type="term" value="P:'de novo' UMP biosynthetic process"/>
    <property type="evidence" value="ECO:0007669"/>
    <property type="project" value="UniProtKB-UniRule"/>
</dbReference>
<dbReference type="CDD" id="cd04738">
    <property type="entry name" value="DHOD_2_like"/>
    <property type="match status" value="1"/>
</dbReference>
<dbReference type="FunFam" id="3.20.20.70:FF:000028">
    <property type="entry name" value="Dihydroorotate dehydrogenase (quinone)"/>
    <property type="match status" value="1"/>
</dbReference>
<dbReference type="Gene3D" id="3.20.20.70">
    <property type="entry name" value="Aldolase class I"/>
    <property type="match status" value="1"/>
</dbReference>
<dbReference type="HAMAP" id="MF_00225">
    <property type="entry name" value="DHO_dh_type2"/>
    <property type="match status" value="1"/>
</dbReference>
<dbReference type="InterPro" id="IPR013785">
    <property type="entry name" value="Aldolase_TIM"/>
</dbReference>
<dbReference type="InterPro" id="IPR050074">
    <property type="entry name" value="DHO_dehydrogenase"/>
</dbReference>
<dbReference type="InterPro" id="IPR012135">
    <property type="entry name" value="Dihydroorotate_DH_1_2"/>
</dbReference>
<dbReference type="InterPro" id="IPR005719">
    <property type="entry name" value="Dihydroorotate_DH_2"/>
</dbReference>
<dbReference type="InterPro" id="IPR005720">
    <property type="entry name" value="Dihydroorotate_DH_cat"/>
</dbReference>
<dbReference type="InterPro" id="IPR001295">
    <property type="entry name" value="Dihydroorotate_DH_CS"/>
</dbReference>
<dbReference type="NCBIfam" id="NF003644">
    <property type="entry name" value="PRK05286.1-1"/>
    <property type="match status" value="1"/>
</dbReference>
<dbReference type="NCBIfam" id="NF003645">
    <property type="entry name" value="PRK05286.1-2"/>
    <property type="match status" value="1"/>
</dbReference>
<dbReference type="NCBIfam" id="NF003646">
    <property type="entry name" value="PRK05286.1-4"/>
    <property type="match status" value="1"/>
</dbReference>
<dbReference type="NCBIfam" id="NF003652">
    <property type="entry name" value="PRK05286.2-5"/>
    <property type="match status" value="1"/>
</dbReference>
<dbReference type="NCBIfam" id="TIGR01036">
    <property type="entry name" value="pyrD_sub2"/>
    <property type="match status" value="1"/>
</dbReference>
<dbReference type="PANTHER" id="PTHR48109:SF4">
    <property type="entry name" value="DIHYDROOROTATE DEHYDROGENASE (QUINONE), MITOCHONDRIAL"/>
    <property type="match status" value="1"/>
</dbReference>
<dbReference type="PANTHER" id="PTHR48109">
    <property type="entry name" value="DIHYDROOROTATE DEHYDROGENASE (QUINONE), MITOCHONDRIAL-RELATED"/>
    <property type="match status" value="1"/>
</dbReference>
<dbReference type="Pfam" id="PF01180">
    <property type="entry name" value="DHO_dh"/>
    <property type="match status" value="1"/>
</dbReference>
<dbReference type="PIRSF" id="PIRSF000164">
    <property type="entry name" value="DHO_oxidase"/>
    <property type="match status" value="1"/>
</dbReference>
<dbReference type="SUPFAM" id="SSF51395">
    <property type="entry name" value="FMN-linked oxidoreductases"/>
    <property type="match status" value="1"/>
</dbReference>
<dbReference type="PROSITE" id="PS00911">
    <property type="entry name" value="DHODEHASE_1"/>
    <property type="match status" value="1"/>
</dbReference>
<dbReference type="PROSITE" id="PS00912">
    <property type="entry name" value="DHODEHASE_2"/>
    <property type="match status" value="1"/>
</dbReference>
<name>PYRD_AROAE</name>